<proteinExistence type="inferred from homology"/>
<feature type="chain" id="PRO_1000025601" description="Phosphoenolpyruvate carboxylase">
    <location>
        <begin position="1"/>
        <end position="904"/>
    </location>
</feature>
<feature type="region of interest" description="Disordered" evidence="2">
    <location>
        <begin position="52"/>
        <end position="71"/>
    </location>
</feature>
<feature type="compositionally biased region" description="Polar residues" evidence="2">
    <location>
        <begin position="60"/>
        <end position="70"/>
    </location>
</feature>
<feature type="active site" evidence="1">
    <location>
        <position position="151"/>
    </location>
</feature>
<feature type="active site" evidence="1">
    <location>
        <position position="570"/>
    </location>
</feature>
<reference key="1">
    <citation type="journal article" date="2005" name="J. Bacteriol.">
        <title>Insights into genome plasticity and pathogenicity of the plant pathogenic Bacterium Xanthomonas campestris pv. vesicatoria revealed by the complete genome sequence.</title>
        <authorList>
            <person name="Thieme F."/>
            <person name="Koebnik R."/>
            <person name="Bekel T."/>
            <person name="Berger C."/>
            <person name="Boch J."/>
            <person name="Buettner D."/>
            <person name="Caldana C."/>
            <person name="Gaigalat L."/>
            <person name="Goesmann A."/>
            <person name="Kay S."/>
            <person name="Kirchner O."/>
            <person name="Lanz C."/>
            <person name="Linke B."/>
            <person name="McHardy A.C."/>
            <person name="Meyer F."/>
            <person name="Mittenhuber G."/>
            <person name="Nies D.H."/>
            <person name="Niesbach-Kloesgen U."/>
            <person name="Patschkowski T."/>
            <person name="Rueckert C."/>
            <person name="Rupp O."/>
            <person name="Schneiker S."/>
            <person name="Schuster S.C."/>
            <person name="Vorhoelter F.J."/>
            <person name="Weber E."/>
            <person name="Puehler A."/>
            <person name="Bonas U."/>
            <person name="Bartels D."/>
            <person name="Kaiser O."/>
        </authorList>
    </citation>
    <scope>NUCLEOTIDE SEQUENCE [LARGE SCALE GENOMIC DNA]</scope>
    <source>
        <strain>85-10</strain>
    </source>
</reference>
<protein>
    <recommendedName>
        <fullName evidence="1">Phosphoenolpyruvate carboxylase</fullName>
        <shortName evidence="1">PEPC</shortName>
        <shortName evidence="1">PEPCase</shortName>
        <ecNumber evidence="1">4.1.1.31</ecNumber>
    </recommendedName>
</protein>
<evidence type="ECO:0000255" key="1">
    <source>
        <dbReference type="HAMAP-Rule" id="MF_00595"/>
    </source>
</evidence>
<evidence type="ECO:0000256" key="2">
    <source>
        <dbReference type="SAM" id="MobiDB-lite"/>
    </source>
</evidence>
<keyword id="KW-0120">Carbon dioxide fixation</keyword>
<keyword id="KW-0456">Lyase</keyword>
<keyword id="KW-0460">Magnesium</keyword>
<accession>Q3BXC4</accession>
<gene>
    <name evidence="1" type="primary">ppc</name>
    <name type="ordered locus">XCV0858</name>
</gene>
<comment type="function">
    <text evidence="1">Forms oxaloacetate, a four-carbon dicarboxylic acid source for the tricarboxylic acid cycle.</text>
</comment>
<comment type="catalytic activity">
    <reaction evidence="1">
        <text>oxaloacetate + phosphate = phosphoenolpyruvate + hydrogencarbonate</text>
        <dbReference type="Rhea" id="RHEA:28370"/>
        <dbReference type="ChEBI" id="CHEBI:16452"/>
        <dbReference type="ChEBI" id="CHEBI:17544"/>
        <dbReference type="ChEBI" id="CHEBI:43474"/>
        <dbReference type="ChEBI" id="CHEBI:58702"/>
        <dbReference type="EC" id="4.1.1.31"/>
    </reaction>
</comment>
<comment type="cofactor">
    <cofactor evidence="1">
        <name>Mg(2+)</name>
        <dbReference type="ChEBI" id="CHEBI:18420"/>
    </cofactor>
</comment>
<comment type="similarity">
    <text evidence="1">Belongs to the PEPCase type 1 family.</text>
</comment>
<organism>
    <name type="scientific">Xanthomonas euvesicatoria pv. vesicatoria (strain 85-10)</name>
    <name type="common">Xanthomonas campestris pv. vesicatoria</name>
    <dbReference type="NCBI Taxonomy" id="316273"/>
    <lineage>
        <taxon>Bacteria</taxon>
        <taxon>Pseudomonadati</taxon>
        <taxon>Pseudomonadota</taxon>
        <taxon>Gammaproteobacteria</taxon>
        <taxon>Lysobacterales</taxon>
        <taxon>Lysobacteraceae</taxon>
        <taxon>Xanthomonas</taxon>
    </lineage>
</organism>
<dbReference type="EC" id="4.1.1.31" evidence="1"/>
<dbReference type="EMBL" id="AM039952">
    <property type="protein sequence ID" value="CAJ22489.1"/>
    <property type="molecule type" value="Genomic_DNA"/>
</dbReference>
<dbReference type="RefSeq" id="WP_011346444.1">
    <property type="nucleotide sequence ID" value="NZ_CP017190.1"/>
</dbReference>
<dbReference type="SMR" id="Q3BXC4"/>
<dbReference type="STRING" id="456327.BJD11_18500"/>
<dbReference type="GeneID" id="63990098"/>
<dbReference type="KEGG" id="xcv:XCV0858"/>
<dbReference type="eggNOG" id="COG2352">
    <property type="taxonomic scope" value="Bacteria"/>
</dbReference>
<dbReference type="HOGENOM" id="CLU_006557_2_0_6"/>
<dbReference type="Proteomes" id="UP000007069">
    <property type="component" value="Chromosome"/>
</dbReference>
<dbReference type="GO" id="GO:0005829">
    <property type="term" value="C:cytosol"/>
    <property type="evidence" value="ECO:0007669"/>
    <property type="project" value="TreeGrafter"/>
</dbReference>
<dbReference type="GO" id="GO:0000287">
    <property type="term" value="F:magnesium ion binding"/>
    <property type="evidence" value="ECO:0007669"/>
    <property type="project" value="UniProtKB-UniRule"/>
</dbReference>
<dbReference type="GO" id="GO:0008964">
    <property type="term" value="F:phosphoenolpyruvate carboxylase activity"/>
    <property type="evidence" value="ECO:0007669"/>
    <property type="project" value="UniProtKB-UniRule"/>
</dbReference>
<dbReference type="GO" id="GO:0015977">
    <property type="term" value="P:carbon fixation"/>
    <property type="evidence" value="ECO:0007669"/>
    <property type="project" value="UniProtKB-UniRule"/>
</dbReference>
<dbReference type="GO" id="GO:0006107">
    <property type="term" value="P:oxaloacetate metabolic process"/>
    <property type="evidence" value="ECO:0007669"/>
    <property type="project" value="UniProtKB-UniRule"/>
</dbReference>
<dbReference type="GO" id="GO:0006099">
    <property type="term" value="P:tricarboxylic acid cycle"/>
    <property type="evidence" value="ECO:0007669"/>
    <property type="project" value="InterPro"/>
</dbReference>
<dbReference type="FunFam" id="1.20.1440.90:FF:000004">
    <property type="entry name" value="Phosphoenolpyruvate carboxylase"/>
    <property type="match status" value="1"/>
</dbReference>
<dbReference type="Gene3D" id="1.20.1440.90">
    <property type="entry name" value="Phosphoenolpyruvate/pyruvate domain"/>
    <property type="match status" value="1"/>
</dbReference>
<dbReference type="HAMAP" id="MF_00595">
    <property type="entry name" value="PEPcase_type1"/>
    <property type="match status" value="1"/>
</dbReference>
<dbReference type="InterPro" id="IPR021135">
    <property type="entry name" value="PEP_COase"/>
</dbReference>
<dbReference type="InterPro" id="IPR022805">
    <property type="entry name" value="PEP_COase_bac/pln-type"/>
</dbReference>
<dbReference type="InterPro" id="IPR018129">
    <property type="entry name" value="PEP_COase_Lys_AS"/>
</dbReference>
<dbReference type="InterPro" id="IPR033129">
    <property type="entry name" value="PEPCASE_His_AS"/>
</dbReference>
<dbReference type="InterPro" id="IPR015813">
    <property type="entry name" value="Pyrv/PenolPyrv_kinase-like_dom"/>
</dbReference>
<dbReference type="NCBIfam" id="NF000584">
    <property type="entry name" value="PRK00009.1"/>
    <property type="match status" value="1"/>
</dbReference>
<dbReference type="PANTHER" id="PTHR30523">
    <property type="entry name" value="PHOSPHOENOLPYRUVATE CARBOXYLASE"/>
    <property type="match status" value="1"/>
</dbReference>
<dbReference type="PANTHER" id="PTHR30523:SF6">
    <property type="entry name" value="PHOSPHOENOLPYRUVATE CARBOXYLASE"/>
    <property type="match status" value="1"/>
</dbReference>
<dbReference type="Pfam" id="PF00311">
    <property type="entry name" value="PEPcase"/>
    <property type="match status" value="1"/>
</dbReference>
<dbReference type="PRINTS" id="PR00150">
    <property type="entry name" value="PEPCARBXLASE"/>
</dbReference>
<dbReference type="SUPFAM" id="SSF51621">
    <property type="entry name" value="Phosphoenolpyruvate/pyruvate domain"/>
    <property type="match status" value="1"/>
</dbReference>
<dbReference type="PROSITE" id="PS00781">
    <property type="entry name" value="PEPCASE_1"/>
    <property type="match status" value="1"/>
</dbReference>
<dbReference type="PROSITE" id="PS00393">
    <property type="entry name" value="PEPCASE_2"/>
    <property type="match status" value="1"/>
</dbReference>
<name>CAPP_XANE5</name>
<sequence>MNEYRSSLVFATPDLPLRDDVRRLGALVGDLLAEQVSAEFLDEIERVRTTAISRRESDAPPSTLSEQLTGRQPRDAEALVRAFSTYFQVVNIAERVHRIRRRREYQRSGTDTPQPDGLHDALRRLKAQGVTLDELSQWLPRIDVEPVFTAHPTEAVRRALLEKEQLMVASLVDNLDGMRTPNERASDAARFRMALTASWQTADSSPVRPTVDDEREHVGFYLTQVLYRVIPVMYETLEHAIEETYGSVPALPRLLRFGTWVGGDMDGNPNVDAKTIAGTLDAQRRAVLDRYQKELWQLASLLSQSTTLVQVSAELTAQLERYRALLPDAAARSRPRHGDMPYRLLNDLMRARLQATLDDAEGAYSAPSELEHDLQLILDSLQANKGLHAGWFAVRRLLWRVRSFGFHLARLDVRQESSVHARAVADALGQTDWDAQDATQRAAVLGPYAAGQEPLPRVDDEGNARLDAVFAALADARTRHGADALGSYIISMAHNRADVLTVLALARRGGLVDDAGAVPLDIVPLFETVDDLRGGTGTVQDLLADPVYRQHLAARGDTQMVMLGYSDSGKDGGIAASRWGLQRAQVELLEAAAELGVRLTFFHGRGGSIARGGGKTSRALDAAPRGSVDGRLRVTEQGEVIHRKYGIRALALRSLEQMTGAVLLSSLRPRAPEPREAHWRPVMDLVAERSTVAYRAFVGAPEFMQYFRLATPIDVIERMTLGSRPSRRLGQDAALSNLRAIPWVFAWSQARAVIPGWYGVGSGLQAAVDAGHEDTLREMAQDWPFFRTFLDDIAMVLSKGDLNIAELFSRLSGDLHTRFFPLIRDELALTKAWVKALLQQQSLLQHDPRLALSIRLRNPYIDPISVLQVDLLQRWRATDGEDEALLRALVACVNGVSQGVQNTG</sequence>